<feature type="chain" id="PRO_0000326740" description="Acylphosphatase">
    <location>
        <begin position="1"/>
        <end position="93"/>
    </location>
</feature>
<feature type="domain" description="Acylphosphatase-like" evidence="1">
    <location>
        <begin position="5"/>
        <end position="93"/>
    </location>
</feature>
<feature type="active site" evidence="1">
    <location>
        <position position="20"/>
    </location>
</feature>
<feature type="active site" evidence="1">
    <location>
        <position position="38"/>
    </location>
</feature>
<keyword id="KW-0378">Hydrolase</keyword>
<keyword id="KW-1185">Reference proteome</keyword>
<protein>
    <recommendedName>
        <fullName>Acylphosphatase</fullName>
        <ecNumber>3.6.1.7</ecNumber>
    </recommendedName>
    <alternativeName>
        <fullName>Acylphosphate phosphohydrolase</fullName>
    </alternativeName>
</protein>
<evidence type="ECO:0000255" key="1">
    <source>
        <dbReference type="PROSITE-ProRule" id="PRU00520"/>
    </source>
</evidence>
<evidence type="ECO:0000305" key="2"/>
<name>ACYP_LISMO</name>
<sequence length="93" mass="10466">MARDTAILRVTGFVQGVGFRYTTKHVAYKYDISGTVKNLDDGSVEIHAIAEEENLNKFIDAIKKGPSPGCRIEHVYIYKGAPVEERKTFDIVY</sequence>
<organism>
    <name type="scientific">Listeria monocytogenes serovar 1/2a (strain ATCC BAA-679 / EGD-e)</name>
    <dbReference type="NCBI Taxonomy" id="169963"/>
    <lineage>
        <taxon>Bacteria</taxon>
        <taxon>Bacillati</taxon>
        <taxon>Bacillota</taxon>
        <taxon>Bacilli</taxon>
        <taxon>Bacillales</taxon>
        <taxon>Listeriaceae</taxon>
        <taxon>Listeria</taxon>
    </lineage>
</organism>
<comment type="catalytic activity">
    <reaction>
        <text>an acyl phosphate + H2O = a carboxylate + phosphate + H(+)</text>
        <dbReference type="Rhea" id="RHEA:14965"/>
        <dbReference type="ChEBI" id="CHEBI:15377"/>
        <dbReference type="ChEBI" id="CHEBI:15378"/>
        <dbReference type="ChEBI" id="CHEBI:29067"/>
        <dbReference type="ChEBI" id="CHEBI:43474"/>
        <dbReference type="ChEBI" id="CHEBI:59918"/>
        <dbReference type="EC" id="3.6.1.7"/>
    </reaction>
</comment>
<comment type="similarity">
    <text evidence="2">Belongs to the acylphosphatase family.</text>
</comment>
<dbReference type="EC" id="3.6.1.7"/>
<dbReference type="EMBL" id="AL591978">
    <property type="protein sequence ID" value="CAC99459.1"/>
    <property type="molecule type" value="Genomic_DNA"/>
</dbReference>
<dbReference type="PIR" id="AE1247">
    <property type="entry name" value="AE1247"/>
</dbReference>
<dbReference type="RefSeq" id="NP_464906.1">
    <property type="nucleotide sequence ID" value="NC_003210.1"/>
</dbReference>
<dbReference type="RefSeq" id="WP_003722507.1">
    <property type="nucleotide sequence ID" value="NZ_CP149495.1"/>
</dbReference>
<dbReference type="SMR" id="Q8Y7A7"/>
<dbReference type="STRING" id="169963.gene:17594038"/>
<dbReference type="PaxDb" id="169963-lmo1381"/>
<dbReference type="EnsemblBacteria" id="CAC99459">
    <property type="protein sequence ID" value="CAC99459"/>
    <property type="gene ID" value="CAC99459"/>
</dbReference>
<dbReference type="GeneID" id="987841"/>
<dbReference type="KEGG" id="lmo:lmo1381"/>
<dbReference type="PATRIC" id="fig|169963.11.peg.1419"/>
<dbReference type="eggNOG" id="COG1254">
    <property type="taxonomic scope" value="Bacteria"/>
</dbReference>
<dbReference type="HOGENOM" id="CLU_141932_1_2_9"/>
<dbReference type="OrthoDB" id="9808093at2"/>
<dbReference type="PhylomeDB" id="Q8Y7A7"/>
<dbReference type="BioCyc" id="LMON169963:LMO1381-MONOMER"/>
<dbReference type="Proteomes" id="UP000000817">
    <property type="component" value="Chromosome"/>
</dbReference>
<dbReference type="GO" id="GO:0003998">
    <property type="term" value="F:acylphosphatase activity"/>
    <property type="evidence" value="ECO:0007669"/>
    <property type="project" value="UniProtKB-EC"/>
</dbReference>
<dbReference type="Gene3D" id="3.30.70.100">
    <property type="match status" value="1"/>
</dbReference>
<dbReference type="InterPro" id="IPR020456">
    <property type="entry name" value="Acylphosphatase"/>
</dbReference>
<dbReference type="InterPro" id="IPR001792">
    <property type="entry name" value="Acylphosphatase-like_dom"/>
</dbReference>
<dbReference type="InterPro" id="IPR036046">
    <property type="entry name" value="Acylphosphatase-like_dom_sf"/>
</dbReference>
<dbReference type="InterPro" id="IPR017968">
    <property type="entry name" value="Acylphosphatase_CS"/>
</dbReference>
<dbReference type="NCBIfam" id="NF011015">
    <property type="entry name" value="PRK14443.1"/>
    <property type="match status" value="1"/>
</dbReference>
<dbReference type="PANTHER" id="PTHR47268">
    <property type="entry name" value="ACYLPHOSPHATASE"/>
    <property type="match status" value="1"/>
</dbReference>
<dbReference type="PANTHER" id="PTHR47268:SF4">
    <property type="entry name" value="ACYLPHOSPHATASE"/>
    <property type="match status" value="1"/>
</dbReference>
<dbReference type="Pfam" id="PF00708">
    <property type="entry name" value="Acylphosphatase"/>
    <property type="match status" value="1"/>
</dbReference>
<dbReference type="SUPFAM" id="SSF54975">
    <property type="entry name" value="Acylphosphatase/BLUF domain-like"/>
    <property type="match status" value="1"/>
</dbReference>
<dbReference type="PROSITE" id="PS00150">
    <property type="entry name" value="ACYLPHOSPHATASE_1"/>
    <property type="match status" value="1"/>
</dbReference>
<dbReference type="PROSITE" id="PS51160">
    <property type="entry name" value="ACYLPHOSPHATASE_3"/>
    <property type="match status" value="1"/>
</dbReference>
<proteinExistence type="inferred from homology"/>
<reference key="1">
    <citation type="journal article" date="2001" name="Science">
        <title>Comparative genomics of Listeria species.</title>
        <authorList>
            <person name="Glaser P."/>
            <person name="Frangeul L."/>
            <person name="Buchrieser C."/>
            <person name="Rusniok C."/>
            <person name="Amend A."/>
            <person name="Baquero F."/>
            <person name="Berche P."/>
            <person name="Bloecker H."/>
            <person name="Brandt P."/>
            <person name="Chakraborty T."/>
            <person name="Charbit A."/>
            <person name="Chetouani F."/>
            <person name="Couve E."/>
            <person name="de Daruvar A."/>
            <person name="Dehoux P."/>
            <person name="Domann E."/>
            <person name="Dominguez-Bernal G."/>
            <person name="Duchaud E."/>
            <person name="Durant L."/>
            <person name="Dussurget O."/>
            <person name="Entian K.-D."/>
            <person name="Fsihi H."/>
            <person name="Garcia-del Portillo F."/>
            <person name="Garrido P."/>
            <person name="Gautier L."/>
            <person name="Goebel W."/>
            <person name="Gomez-Lopez N."/>
            <person name="Hain T."/>
            <person name="Hauf J."/>
            <person name="Jackson D."/>
            <person name="Jones L.-M."/>
            <person name="Kaerst U."/>
            <person name="Kreft J."/>
            <person name="Kuhn M."/>
            <person name="Kunst F."/>
            <person name="Kurapkat G."/>
            <person name="Madueno E."/>
            <person name="Maitournam A."/>
            <person name="Mata Vicente J."/>
            <person name="Ng E."/>
            <person name="Nedjari H."/>
            <person name="Nordsiek G."/>
            <person name="Novella S."/>
            <person name="de Pablos B."/>
            <person name="Perez-Diaz J.-C."/>
            <person name="Purcell R."/>
            <person name="Remmel B."/>
            <person name="Rose M."/>
            <person name="Schlueter T."/>
            <person name="Simoes N."/>
            <person name="Tierrez A."/>
            <person name="Vazquez-Boland J.-A."/>
            <person name="Voss H."/>
            <person name="Wehland J."/>
            <person name="Cossart P."/>
        </authorList>
    </citation>
    <scope>NUCLEOTIDE SEQUENCE [LARGE SCALE GENOMIC DNA]</scope>
    <source>
        <strain>ATCC BAA-679 / EGD-e</strain>
    </source>
</reference>
<gene>
    <name type="primary">acyP</name>
    <name type="ordered locus">lmo1381</name>
</gene>
<accession>Q8Y7A7</accession>